<organism>
    <name type="scientific">Vaccinia virus (strain Western Reserve)</name>
    <name type="common">VACV</name>
    <name type="synonym">Vaccinia virus (strain WR)</name>
    <dbReference type="NCBI Taxonomy" id="10254"/>
    <lineage>
        <taxon>Viruses</taxon>
        <taxon>Varidnaviria</taxon>
        <taxon>Bamfordvirae</taxon>
        <taxon>Nucleocytoviricota</taxon>
        <taxon>Pokkesviricetes</taxon>
        <taxon>Chitovirales</taxon>
        <taxon>Poxviridae</taxon>
        <taxon>Chordopoxvirinae</taxon>
        <taxon>Orthopoxvirus</taxon>
        <taxon>Vaccinia virus</taxon>
    </lineage>
</organism>
<sequence>MPFRDLILFNLSKFLLTEDEESLEIVSSLCRGFEISYDDLITYFPDRKYHKYISKVFEHVDLSEELSMEFHDTTLRDLVYLRLYKYSKCIRPCYKLGDNLKGIVVIKDRNIYIREANDDLIEYLLKEYTPQIYTYSNERVPITGSKLILCGFSQVTFMAYTTSHITTNKKVDVLVSKKCIDELVDPINYQILQNLFDKGSGTINKILRKIFYSVTGGQTP</sequence>
<protein>
    <recommendedName>
        <fullName>Late transcription elongation factor OPG087</fullName>
    </recommendedName>
    <alternativeName>
        <fullName>Late transcription elongation factor G2</fullName>
    </alternativeName>
    <alternativeName>
        <fullName>Protein G2</fullName>
    </alternativeName>
</protein>
<proteinExistence type="evidence at protein level"/>
<dbReference type="EMBL" id="J03399">
    <property type="protein sequence ID" value="AAB59813.1"/>
    <property type="molecule type" value="Genomic_DNA"/>
</dbReference>
<dbReference type="EMBL" id="AY243312">
    <property type="protein sequence ID" value="AAO89359.1"/>
    <property type="molecule type" value="Genomic_DNA"/>
</dbReference>
<dbReference type="PIR" id="A39986">
    <property type="entry name" value="QQVZW1"/>
</dbReference>
<dbReference type="RefSeq" id="YP_232962.1">
    <property type="nucleotide sequence ID" value="NC_006998.1"/>
</dbReference>
<dbReference type="IntAct" id="P68456">
    <property type="interactions" value="2"/>
</dbReference>
<dbReference type="MINT" id="P68456"/>
<dbReference type="DNASU" id="3707536"/>
<dbReference type="GeneID" id="3707536"/>
<dbReference type="KEGG" id="vg:3707536"/>
<dbReference type="Proteomes" id="UP000000344">
    <property type="component" value="Genome"/>
</dbReference>
<dbReference type="InterPro" id="IPR008446">
    <property type="entry name" value="Chordopox_G2"/>
</dbReference>
<dbReference type="Pfam" id="PF05796">
    <property type="entry name" value="Chordopox_G2"/>
    <property type="match status" value="1"/>
</dbReference>
<gene>
    <name type="primary">OPG087</name>
    <name type="ordered locus">VACWR080</name>
    <name type="ORF">G2R</name>
</gene>
<keyword id="KW-0244">Early protein</keyword>
<keyword id="KW-0251">Elongation factor</keyword>
<keyword id="KW-0648">Protein biosynthesis</keyword>
<keyword id="KW-1185">Reference proteome</keyword>
<accession>P68456</accession>
<accession>P21023</accession>
<accession>Q76ZU2</accession>
<name>PG087_VACCW</name>
<feature type="chain" id="PRO_0000099525" description="Late transcription elongation factor OPG087">
    <location>
        <begin position="1"/>
        <end position="220"/>
    </location>
</feature>
<feature type="sequence variant" description="In strain: Temperature-sensitive mutant.">
    <original>G</original>
    <variation>R</variation>
    <location>
        <position position="151"/>
    </location>
</feature>
<evidence type="ECO:0000269" key="1">
    <source>
    </source>
</evidence>
<evidence type="ECO:0000269" key="2">
    <source>
    </source>
</evidence>
<evidence type="ECO:0000269" key="3">
    <source>
    </source>
</evidence>
<evidence type="ECO:0000305" key="4"/>
<comment type="function">
    <text evidence="1">Involved in postreplicative transcription elongation on intermediate and late genes.</text>
</comment>
<comment type="subunit">
    <text evidence="3">Interacts with H5 and A18. Might be part of a transcription complex composed at least of OPG087/G2, OPG145/A18, and OPG110/H5.</text>
</comment>
<comment type="interaction">
    <interactant intactId="EBI-7273347">
        <id>P68456</id>
    </interactant>
    <interactant intactId="EBI-7272435">
        <id>P07242</id>
        <label>OPG110</label>
    </interactant>
    <organismsDiffer>false</organismsDiffer>
    <experiments>4</experiments>
</comment>
<comment type="induction">
    <text evidence="2">Expressed in the early phase of the viral replicative cycle.</text>
</comment>
<comment type="similarity">
    <text evidence="4">Belongs to the orthopoxvirus OPG087 family.</text>
</comment>
<reference key="1">
    <citation type="journal article" date="1991" name="Virology">
        <title>Genetic and molecular biological characterization of a vaccinia virus gene which renders the virus dependent on isatin-beta-thiosemicarbazone (IBT).</title>
        <authorList>
            <person name="Meis R.J."/>
            <person name="Condit R.C."/>
        </authorList>
    </citation>
    <scope>NUCLEOTIDE SEQUENCE [GENOMIC DNA]</scope>
    <source>
        <strain>Temperature-sensitive mutant</strain>
    </source>
</reference>
<reference key="2">
    <citation type="submission" date="2003-02" db="EMBL/GenBank/DDBJ databases">
        <title>Sequencing of the coding region of Vaccinia-WR to an average 9-fold redundancy and an error rate of 0.16/10kb.</title>
        <authorList>
            <person name="Esposito J.J."/>
            <person name="Frace A.M."/>
            <person name="Sammons S.A."/>
            <person name="Olsen-Rasmussen M."/>
            <person name="Osborne J."/>
            <person name="Wohlhueter R."/>
        </authorList>
    </citation>
    <scope>NUCLEOTIDE SEQUENCE [LARGE SCALE GENOMIC DNA]</scope>
</reference>
<reference key="3">
    <citation type="journal article" date="1998" name="Virology">
        <title>Characterization of the interactions among vaccinia virus transcription factors G2R, A18R, and H5R.</title>
        <authorList>
            <person name="Black E.P."/>
            <person name="Moussatche N."/>
            <person name="Condit R.C."/>
        </authorList>
    </citation>
    <scope>INTERACTION WITH H5 AND A18</scope>
    <scope>POSSIBLE IDENTIFICATION IN A COMPLEX WITH A18 AND H5</scope>
</reference>
<reference key="4">
    <citation type="journal article" date="2007" name="Virology">
        <title>Mapping and phenotypic analysis of spontaneous isatin-beta-thiosemicarbazone resistant mutants of vaccinia virus.</title>
        <authorList>
            <person name="Cresawn S.G."/>
            <person name="Prins C."/>
            <person name="Latner D.R."/>
            <person name="Condit R.C."/>
        </authorList>
    </citation>
    <scope>FUNCTION</scope>
</reference>
<reference key="5">
    <citation type="journal article" date="2003" name="J. Gen. Virol.">
        <title>Vaccinia virus transcription.</title>
        <authorList>
            <person name="Broyles S.S."/>
        </authorList>
    </citation>
    <scope>REVIEW</scope>
</reference>
<reference key="6">
    <citation type="journal article" date="2015" name="J. Virol.">
        <title>Deciphering poxvirus gene expression by RNA sequencing and ribosome profiling.</title>
        <authorList>
            <person name="Yang Z."/>
            <person name="Cao S."/>
            <person name="Martens C.A."/>
            <person name="Porcella S.F."/>
            <person name="Xie Z."/>
            <person name="Ma M."/>
            <person name="Shen B."/>
            <person name="Moss B."/>
        </authorList>
    </citation>
    <scope>INDUCTION</scope>
</reference>
<organismHost>
    <name type="scientific">Bos taurus</name>
    <name type="common">Bovine</name>
    <dbReference type="NCBI Taxonomy" id="9913"/>
</organismHost>